<accession>C4K160</accession>
<protein>
    <recommendedName>
        <fullName evidence="1">Small ribosomal subunit protein bS18</fullName>
    </recommendedName>
    <alternativeName>
        <fullName evidence="2">30S ribosomal protein S18</fullName>
    </alternativeName>
</protein>
<gene>
    <name evidence="1" type="primary">rpsR</name>
    <name type="ordered locus">RPR_02380</name>
</gene>
<sequence length="95" mass="10597">MLKSNNASETAAHKVGDKTAKKVFFRRRKGCPLSVSNAPVIDYKNPELLIKFVSEGGRMLPSRITNVCAKKQRKLNNAIKIARILALLPFVFQAK</sequence>
<evidence type="ECO:0000255" key="1">
    <source>
        <dbReference type="HAMAP-Rule" id="MF_00270"/>
    </source>
</evidence>
<evidence type="ECO:0000305" key="2"/>
<organism>
    <name type="scientific">Rickettsia peacockii (strain Rustic)</name>
    <dbReference type="NCBI Taxonomy" id="562019"/>
    <lineage>
        <taxon>Bacteria</taxon>
        <taxon>Pseudomonadati</taxon>
        <taxon>Pseudomonadota</taxon>
        <taxon>Alphaproteobacteria</taxon>
        <taxon>Rickettsiales</taxon>
        <taxon>Rickettsiaceae</taxon>
        <taxon>Rickettsieae</taxon>
        <taxon>Rickettsia</taxon>
        <taxon>spotted fever group</taxon>
    </lineage>
</organism>
<reference key="1">
    <citation type="journal article" date="2009" name="PLoS ONE">
        <title>Genome sequence of the endosymbiont Rickettsia peacockii and comparison with virulent Rickettsia rickettsii: identification of virulence factors.</title>
        <authorList>
            <person name="Felsheim R.F."/>
            <person name="Kurtti T.J."/>
            <person name="Munderloh U.G."/>
        </authorList>
    </citation>
    <scope>NUCLEOTIDE SEQUENCE [LARGE SCALE GENOMIC DNA]</scope>
    <source>
        <strain>Rustic</strain>
    </source>
</reference>
<feature type="chain" id="PRO_1000204736" description="Small ribosomal subunit protein bS18">
    <location>
        <begin position="1"/>
        <end position="95"/>
    </location>
</feature>
<keyword id="KW-0687">Ribonucleoprotein</keyword>
<keyword id="KW-0689">Ribosomal protein</keyword>
<keyword id="KW-0694">RNA-binding</keyword>
<keyword id="KW-0699">rRNA-binding</keyword>
<comment type="function">
    <text evidence="1">Binds as a heterodimer with protein bS6 to the central domain of the 16S rRNA, where it helps stabilize the platform of the 30S subunit.</text>
</comment>
<comment type="subunit">
    <text evidence="1">Part of the 30S ribosomal subunit. Forms a tight heterodimer with protein bS6.</text>
</comment>
<comment type="similarity">
    <text evidence="1">Belongs to the bacterial ribosomal protein bS18 family.</text>
</comment>
<name>RS18_RICPU</name>
<proteinExistence type="inferred from homology"/>
<dbReference type="EMBL" id="CP001227">
    <property type="protein sequence ID" value="ACR47311.1"/>
    <property type="molecule type" value="Genomic_DNA"/>
</dbReference>
<dbReference type="RefSeq" id="WP_012736576.1">
    <property type="nucleotide sequence ID" value="NC_012730.1"/>
</dbReference>
<dbReference type="SMR" id="C4K160"/>
<dbReference type="KEGG" id="rpk:RPR_02380"/>
<dbReference type="HOGENOM" id="CLU_148710_2_1_5"/>
<dbReference type="Proteomes" id="UP000005015">
    <property type="component" value="Chromosome"/>
</dbReference>
<dbReference type="GO" id="GO:0022627">
    <property type="term" value="C:cytosolic small ribosomal subunit"/>
    <property type="evidence" value="ECO:0007669"/>
    <property type="project" value="TreeGrafter"/>
</dbReference>
<dbReference type="GO" id="GO:0070181">
    <property type="term" value="F:small ribosomal subunit rRNA binding"/>
    <property type="evidence" value="ECO:0007669"/>
    <property type="project" value="TreeGrafter"/>
</dbReference>
<dbReference type="GO" id="GO:0003735">
    <property type="term" value="F:structural constituent of ribosome"/>
    <property type="evidence" value="ECO:0007669"/>
    <property type="project" value="InterPro"/>
</dbReference>
<dbReference type="GO" id="GO:0006412">
    <property type="term" value="P:translation"/>
    <property type="evidence" value="ECO:0007669"/>
    <property type="project" value="UniProtKB-UniRule"/>
</dbReference>
<dbReference type="Gene3D" id="4.10.640.10">
    <property type="entry name" value="Ribosomal protein S18"/>
    <property type="match status" value="1"/>
</dbReference>
<dbReference type="HAMAP" id="MF_00270">
    <property type="entry name" value="Ribosomal_bS18"/>
    <property type="match status" value="1"/>
</dbReference>
<dbReference type="InterPro" id="IPR001648">
    <property type="entry name" value="Ribosomal_bS18"/>
</dbReference>
<dbReference type="InterPro" id="IPR018275">
    <property type="entry name" value="Ribosomal_bS18_CS"/>
</dbReference>
<dbReference type="InterPro" id="IPR036870">
    <property type="entry name" value="Ribosomal_bS18_sf"/>
</dbReference>
<dbReference type="NCBIfam" id="TIGR00165">
    <property type="entry name" value="S18"/>
    <property type="match status" value="1"/>
</dbReference>
<dbReference type="PANTHER" id="PTHR13479">
    <property type="entry name" value="30S RIBOSOMAL PROTEIN S18"/>
    <property type="match status" value="1"/>
</dbReference>
<dbReference type="PANTHER" id="PTHR13479:SF40">
    <property type="entry name" value="SMALL RIBOSOMAL SUBUNIT PROTEIN BS18M"/>
    <property type="match status" value="1"/>
</dbReference>
<dbReference type="Pfam" id="PF01084">
    <property type="entry name" value="Ribosomal_S18"/>
    <property type="match status" value="1"/>
</dbReference>
<dbReference type="PRINTS" id="PR00974">
    <property type="entry name" value="RIBOSOMALS18"/>
</dbReference>
<dbReference type="SUPFAM" id="SSF46911">
    <property type="entry name" value="Ribosomal protein S18"/>
    <property type="match status" value="1"/>
</dbReference>
<dbReference type="PROSITE" id="PS00057">
    <property type="entry name" value="RIBOSOMAL_S18"/>
    <property type="match status" value="1"/>
</dbReference>